<evidence type="ECO:0000255" key="1">
    <source>
        <dbReference type="HAMAP-Rule" id="MF_00038"/>
    </source>
</evidence>
<reference key="1">
    <citation type="submission" date="2008-01" db="EMBL/GenBank/DDBJ databases">
        <title>Complete sequence of Thermoanaerobacter sp. X514.</title>
        <authorList>
            <consortium name="US DOE Joint Genome Institute"/>
            <person name="Copeland A."/>
            <person name="Lucas S."/>
            <person name="Lapidus A."/>
            <person name="Barry K."/>
            <person name="Glavina del Rio T."/>
            <person name="Dalin E."/>
            <person name="Tice H."/>
            <person name="Pitluck S."/>
            <person name="Bruce D."/>
            <person name="Goodwin L."/>
            <person name="Saunders E."/>
            <person name="Brettin T."/>
            <person name="Detter J.C."/>
            <person name="Han C."/>
            <person name="Schmutz J."/>
            <person name="Larimer F."/>
            <person name="Land M."/>
            <person name="Hauser L."/>
            <person name="Kyrpides N."/>
            <person name="Kim E."/>
            <person name="Hemme C."/>
            <person name="Fields M.W."/>
            <person name="He Z."/>
            <person name="Zhou J."/>
            <person name="Richardson P."/>
        </authorList>
    </citation>
    <scope>NUCLEOTIDE SEQUENCE [LARGE SCALE GENOMIC DNA]</scope>
    <source>
        <strain>X514</strain>
    </source>
</reference>
<keyword id="KW-0131">Cell cycle</keyword>
<keyword id="KW-0132">Cell division</keyword>
<keyword id="KW-1003">Cell membrane</keyword>
<keyword id="KW-0133">Cell shape</keyword>
<keyword id="KW-0961">Cell wall biogenesis/degradation</keyword>
<keyword id="KW-0460">Magnesium</keyword>
<keyword id="KW-0472">Membrane</keyword>
<keyword id="KW-0479">Metal-binding</keyword>
<keyword id="KW-0573">Peptidoglycan synthesis</keyword>
<keyword id="KW-0808">Transferase</keyword>
<keyword id="KW-0812">Transmembrane</keyword>
<keyword id="KW-1133">Transmembrane helix</keyword>
<accession>B0K3H3</accession>
<gene>
    <name evidence="1" type="primary">mraY</name>
    <name type="ordered locus">Teth514_2012</name>
</gene>
<organism>
    <name type="scientific">Thermoanaerobacter sp. (strain X514)</name>
    <dbReference type="NCBI Taxonomy" id="399726"/>
    <lineage>
        <taxon>Bacteria</taxon>
        <taxon>Bacillati</taxon>
        <taxon>Bacillota</taxon>
        <taxon>Clostridia</taxon>
        <taxon>Thermoanaerobacterales</taxon>
        <taxon>Thermoanaerobacteraceae</taxon>
        <taxon>Thermoanaerobacter</taxon>
    </lineage>
</organism>
<feature type="chain" id="PRO_1000090681" description="Phospho-N-acetylmuramoyl-pentapeptide-transferase">
    <location>
        <begin position="1"/>
        <end position="316"/>
    </location>
</feature>
<feature type="transmembrane region" description="Helical" evidence="1">
    <location>
        <begin position="5"/>
        <end position="25"/>
    </location>
</feature>
<feature type="transmembrane region" description="Helical" evidence="1">
    <location>
        <begin position="49"/>
        <end position="69"/>
    </location>
</feature>
<feature type="transmembrane region" description="Helical" evidence="1">
    <location>
        <begin position="76"/>
        <end position="96"/>
    </location>
</feature>
<feature type="transmembrane region" description="Helical" evidence="1">
    <location>
        <begin position="116"/>
        <end position="136"/>
    </location>
</feature>
<feature type="transmembrane region" description="Helical" evidence="1">
    <location>
        <begin position="141"/>
        <end position="161"/>
    </location>
</feature>
<feature type="transmembrane region" description="Helical" evidence="1">
    <location>
        <begin position="172"/>
        <end position="192"/>
    </location>
</feature>
<feature type="transmembrane region" description="Helical" evidence="1">
    <location>
        <begin position="195"/>
        <end position="212"/>
    </location>
</feature>
<feature type="transmembrane region" description="Helical" evidence="1">
    <location>
        <begin position="221"/>
        <end position="241"/>
    </location>
</feature>
<feature type="transmembrane region" description="Helical" evidence="1">
    <location>
        <begin position="244"/>
        <end position="264"/>
    </location>
</feature>
<feature type="transmembrane region" description="Helical" evidence="1">
    <location>
        <begin position="296"/>
        <end position="316"/>
    </location>
</feature>
<name>MRAY_THEPX</name>
<dbReference type="EC" id="2.7.8.13" evidence="1"/>
<dbReference type="EMBL" id="CP000923">
    <property type="protein sequence ID" value="ABY93284.1"/>
    <property type="molecule type" value="Genomic_DNA"/>
</dbReference>
<dbReference type="RefSeq" id="WP_009052548.1">
    <property type="nucleotide sequence ID" value="NC_010320.1"/>
</dbReference>
<dbReference type="SMR" id="B0K3H3"/>
<dbReference type="KEGG" id="tex:Teth514_2012"/>
<dbReference type="HOGENOM" id="CLU_023982_0_1_9"/>
<dbReference type="UniPathway" id="UPA00219"/>
<dbReference type="Proteomes" id="UP000002155">
    <property type="component" value="Chromosome"/>
</dbReference>
<dbReference type="GO" id="GO:0005886">
    <property type="term" value="C:plasma membrane"/>
    <property type="evidence" value="ECO:0007669"/>
    <property type="project" value="UniProtKB-SubCell"/>
</dbReference>
<dbReference type="GO" id="GO:0046872">
    <property type="term" value="F:metal ion binding"/>
    <property type="evidence" value="ECO:0007669"/>
    <property type="project" value="UniProtKB-KW"/>
</dbReference>
<dbReference type="GO" id="GO:0008963">
    <property type="term" value="F:phospho-N-acetylmuramoyl-pentapeptide-transferase activity"/>
    <property type="evidence" value="ECO:0007669"/>
    <property type="project" value="UniProtKB-UniRule"/>
</dbReference>
<dbReference type="GO" id="GO:0051992">
    <property type="term" value="F:UDP-N-acetylmuramoyl-L-alanyl-D-glutamyl-meso-2,6-diaminopimelyl-D-alanyl-D-alanine:undecaprenyl-phosphate transferase activity"/>
    <property type="evidence" value="ECO:0007669"/>
    <property type="project" value="RHEA"/>
</dbReference>
<dbReference type="GO" id="GO:0051301">
    <property type="term" value="P:cell division"/>
    <property type="evidence" value="ECO:0007669"/>
    <property type="project" value="UniProtKB-KW"/>
</dbReference>
<dbReference type="GO" id="GO:0071555">
    <property type="term" value="P:cell wall organization"/>
    <property type="evidence" value="ECO:0007669"/>
    <property type="project" value="UniProtKB-KW"/>
</dbReference>
<dbReference type="GO" id="GO:0009252">
    <property type="term" value="P:peptidoglycan biosynthetic process"/>
    <property type="evidence" value="ECO:0007669"/>
    <property type="project" value="UniProtKB-UniRule"/>
</dbReference>
<dbReference type="GO" id="GO:0008360">
    <property type="term" value="P:regulation of cell shape"/>
    <property type="evidence" value="ECO:0007669"/>
    <property type="project" value="UniProtKB-KW"/>
</dbReference>
<dbReference type="CDD" id="cd06852">
    <property type="entry name" value="GT_MraY"/>
    <property type="match status" value="1"/>
</dbReference>
<dbReference type="HAMAP" id="MF_00038">
    <property type="entry name" value="MraY"/>
    <property type="match status" value="1"/>
</dbReference>
<dbReference type="InterPro" id="IPR000715">
    <property type="entry name" value="Glycosyl_transferase_4"/>
</dbReference>
<dbReference type="InterPro" id="IPR003524">
    <property type="entry name" value="PNAcMuramoyl-5peptid_Trfase"/>
</dbReference>
<dbReference type="InterPro" id="IPR018480">
    <property type="entry name" value="PNAcMuramoyl-5peptid_Trfase_CS"/>
</dbReference>
<dbReference type="NCBIfam" id="TIGR00445">
    <property type="entry name" value="mraY"/>
    <property type="match status" value="1"/>
</dbReference>
<dbReference type="PANTHER" id="PTHR22926">
    <property type="entry name" value="PHOSPHO-N-ACETYLMURAMOYL-PENTAPEPTIDE-TRANSFERASE"/>
    <property type="match status" value="1"/>
</dbReference>
<dbReference type="PANTHER" id="PTHR22926:SF5">
    <property type="entry name" value="PHOSPHO-N-ACETYLMURAMOYL-PENTAPEPTIDE-TRANSFERASE HOMOLOG"/>
    <property type="match status" value="1"/>
</dbReference>
<dbReference type="Pfam" id="PF00953">
    <property type="entry name" value="Glycos_transf_4"/>
    <property type="match status" value="1"/>
</dbReference>
<dbReference type="Pfam" id="PF10555">
    <property type="entry name" value="MraY_sig1"/>
    <property type="match status" value="1"/>
</dbReference>
<dbReference type="PROSITE" id="PS01347">
    <property type="entry name" value="MRAY_1"/>
    <property type="match status" value="1"/>
</dbReference>
<dbReference type="PROSITE" id="PS01348">
    <property type="entry name" value="MRAY_2"/>
    <property type="match status" value="1"/>
</dbReference>
<protein>
    <recommendedName>
        <fullName evidence="1">Phospho-N-acetylmuramoyl-pentapeptide-transferase</fullName>
        <ecNumber evidence="1">2.7.8.13</ecNumber>
    </recommendedName>
    <alternativeName>
        <fullName evidence="1">UDP-MurNAc-pentapeptide phosphotransferase</fullName>
    </alternativeName>
</protein>
<proteinExistence type="inferred from homology"/>
<comment type="function">
    <text evidence="1">Catalyzes the initial step of the lipid cycle reactions in the biosynthesis of the cell wall peptidoglycan: transfers peptidoglycan precursor phospho-MurNAc-pentapeptide from UDP-MurNAc-pentapeptide onto the lipid carrier undecaprenyl phosphate, yielding undecaprenyl-pyrophosphoryl-MurNAc-pentapeptide, known as lipid I.</text>
</comment>
<comment type="catalytic activity">
    <reaction evidence="1">
        <text>UDP-N-acetyl-alpha-D-muramoyl-L-alanyl-gamma-D-glutamyl-meso-2,6-diaminopimeloyl-D-alanyl-D-alanine + di-trans,octa-cis-undecaprenyl phosphate = di-trans,octa-cis-undecaprenyl diphospho-N-acetyl-alpha-D-muramoyl-L-alanyl-D-glutamyl-meso-2,6-diaminopimeloyl-D-alanyl-D-alanine + UMP</text>
        <dbReference type="Rhea" id="RHEA:28386"/>
        <dbReference type="ChEBI" id="CHEBI:57865"/>
        <dbReference type="ChEBI" id="CHEBI:60392"/>
        <dbReference type="ChEBI" id="CHEBI:61386"/>
        <dbReference type="ChEBI" id="CHEBI:61387"/>
        <dbReference type="EC" id="2.7.8.13"/>
    </reaction>
</comment>
<comment type="cofactor">
    <cofactor evidence="1">
        <name>Mg(2+)</name>
        <dbReference type="ChEBI" id="CHEBI:18420"/>
    </cofactor>
</comment>
<comment type="pathway">
    <text evidence="1">Cell wall biogenesis; peptidoglycan biosynthesis.</text>
</comment>
<comment type="subcellular location">
    <subcellularLocation>
        <location evidence="1">Cell membrane</location>
        <topology evidence="1">Multi-pass membrane protein</topology>
    </subcellularLocation>
</comment>
<comment type="similarity">
    <text evidence="1">Belongs to the glycosyltransferase 4 family. MraY subfamily.</text>
</comment>
<sequence>MLQKIILATVVAFVLSLASGPLFIPYLRKLKFGQKVREDGPKSHIKKSGTPTMGGIMFITATVISTLIFSHWNKYLAILLLGFLGYGLIGFADDFLKVYFKRPLGLKAREKLIGQFLLAIIISYFAQEYVGTEVIFPFLKTTIDLGNFYIPFIVFVIVGTVNSVNLTDGLDGLAAGVSFIVMAFFTMTALFLNNITYGAFSAALTGGLLGFLRYNRHPAEIFMGDTGSLAIGGAIATAAVLTKLPLILPLIGIIYVAEAFSVIIQVLSFKLFGKRVFKMSPLHHHFELSGWQEQNVVYAFWIVTLIAMFLSFYSLS</sequence>